<sequence length="501" mass="53926">MATRINYNYEAAVTYTTLKQNERLMNKSLLRLSTGLRILSAADDASGLFIADQLSLVSTGLQQGNRNIQFAISALQIAEGGVAQIYDKLKTMYQKAVSAANDINDPNARAALQRDIENLRDAIQKIAQDTEYNGIRLLDGTLKNGIYIHYGARSEQKLSVAIDDVRASNLGAYLLDLKGQSNSAYDSFANLLTTDTNFDIASTETISIAGVTHSPPTNIVTDARYIADWINGDPTLQQMGIKAKASNRVVGDPWVNVAVDTGDSLTIKFYVGTSTTPAITLTYGPGKTITLDRIISDINSKATGLNLVAKEENGRLVIETSGETVGVEVSKSGTGGTTFSLDQIISGVNKTVNNTNTQASAIKVGDLRIIDDESYTYDFTGIAGAFGLTSPSGTVGITDLYAIDVTTNEGAELAMDILTIAAQKVDEIRSQIGSTIINLQAIYDAKAVAKDNTDNAENIIRNVDFAKEMTEFTKYQIRMQSGIAMLAQANALPQLVLQLLR</sequence>
<name>FLAA_AQUPY</name>
<comment type="function">
    <text>Flagellin is the subunit protein which polymerizes to form the filaments of bacterial flagella.</text>
</comment>
<comment type="subcellular location">
    <subcellularLocation>
        <location>Secreted</location>
    </subcellularLocation>
    <subcellularLocation>
        <location>Bacterial flagellum</location>
    </subcellularLocation>
</comment>
<comment type="similarity">
    <text evidence="1">Belongs to the bacterial flagellin family.</text>
</comment>
<dbReference type="EMBL" id="U17575">
    <property type="protein sequence ID" value="AAA88923.1"/>
    <property type="molecule type" value="Genomic_DNA"/>
</dbReference>
<dbReference type="SMR" id="P46210"/>
<dbReference type="GO" id="GO:0009288">
    <property type="term" value="C:bacterial-type flagellum"/>
    <property type="evidence" value="ECO:0007669"/>
    <property type="project" value="UniProtKB-SubCell"/>
</dbReference>
<dbReference type="GO" id="GO:0005576">
    <property type="term" value="C:extracellular region"/>
    <property type="evidence" value="ECO:0007669"/>
    <property type="project" value="UniProtKB-SubCell"/>
</dbReference>
<dbReference type="GO" id="GO:0005198">
    <property type="term" value="F:structural molecule activity"/>
    <property type="evidence" value="ECO:0007669"/>
    <property type="project" value="InterPro"/>
</dbReference>
<dbReference type="Gene3D" id="3.30.70.2120">
    <property type="match status" value="1"/>
</dbReference>
<dbReference type="Gene3D" id="1.20.1330.10">
    <property type="entry name" value="f41 fragment of flagellin, N-terminal domain"/>
    <property type="match status" value="2"/>
</dbReference>
<dbReference type="InterPro" id="IPR001492">
    <property type="entry name" value="Flagellin"/>
</dbReference>
<dbReference type="InterPro" id="IPR046358">
    <property type="entry name" value="Flagellin_C"/>
</dbReference>
<dbReference type="InterPro" id="IPR001029">
    <property type="entry name" value="Flagellin_N"/>
</dbReference>
<dbReference type="PANTHER" id="PTHR42792">
    <property type="entry name" value="FLAGELLIN"/>
    <property type="match status" value="1"/>
</dbReference>
<dbReference type="PANTHER" id="PTHR42792:SF2">
    <property type="entry name" value="FLAGELLIN"/>
    <property type="match status" value="1"/>
</dbReference>
<dbReference type="Pfam" id="PF00700">
    <property type="entry name" value="Flagellin_C"/>
    <property type="match status" value="1"/>
</dbReference>
<dbReference type="Pfam" id="PF00669">
    <property type="entry name" value="Flagellin_N"/>
    <property type="match status" value="1"/>
</dbReference>
<dbReference type="PRINTS" id="PR00207">
    <property type="entry name" value="FLAGELLIN"/>
</dbReference>
<dbReference type="SUPFAM" id="SSF64518">
    <property type="entry name" value="Phase 1 flagellin"/>
    <property type="match status" value="1"/>
</dbReference>
<proteinExistence type="inferred from homology"/>
<keyword id="KW-0975">Bacterial flagellum</keyword>
<keyword id="KW-0964">Secreted</keyword>
<feature type="chain" id="PRO_0000182584" description="Flagellin">
    <location>
        <begin position="1"/>
        <end position="501"/>
    </location>
</feature>
<accession>P46210</accession>
<reference key="1">
    <citation type="journal article" date="1995" name="J. Bacteriol.">
        <title>Flagellar structure and hyperthermophily: analysis of a single flagellin gene and its product in Aquifex pyrophilus.</title>
        <authorList>
            <person name="Behammer W."/>
            <person name="Shao Z."/>
            <person name="Mages W."/>
            <person name="Rachel R."/>
            <person name="Stetter K.O."/>
            <person name="Schmitt R."/>
        </authorList>
    </citation>
    <scope>NUCLEOTIDE SEQUENCE [GENOMIC DNA]</scope>
    <source>
        <strain>DSM 6858 / JCM 9492 / Kol5A</strain>
    </source>
</reference>
<organism>
    <name type="scientific">Aquifex pyrophilus</name>
    <dbReference type="NCBI Taxonomy" id="2714"/>
    <lineage>
        <taxon>Bacteria</taxon>
        <taxon>Pseudomonadati</taxon>
        <taxon>Aquificota</taxon>
        <taxon>Aquificia</taxon>
        <taxon>Aquificales</taxon>
        <taxon>Aquificaceae</taxon>
        <taxon>Aquifex</taxon>
    </lineage>
</organism>
<gene>
    <name type="primary">flaA</name>
</gene>
<protein>
    <recommendedName>
        <fullName>Flagellin</fullName>
    </recommendedName>
</protein>
<evidence type="ECO:0000305" key="1"/>